<evidence type="ECO:0000255" key="1">
    <source>
        <dbReference type="HAMAP-Rule" id="MF_01366"/>
    </source>
</evidence>
<evidence type="ECO:0000305" key="2"/>
<name>RL13_XANC8</name>
<organism>
    <name type="scientific">Xanthomonas campestris pv. campestris (strain 8004)</name>
    <dbReference type="NCBI Taxonomy" id="314565"/>
    <lineage>
        <taxon>Bacteria</taxon>
        <taxon>Pseudomonadati</taxon>
        <taxon>Pseudomonadota</taxon>
        <taxon>Gammaproteobacteria</taxon>
        <taxon>Lysobacterales</taxon>
        <taxon>Lysobacteraceae</taxon>
        <taxon>Xanthomonas</taxon>
    </lineage>
</organism>
<feature type="chain" id="PRO_0000261828" description="Large ribosomal subunit protein uL13">
    <location>
        <begin position="1"/>
        <end position="142"/>
    </location>
</feature>
<comment type="function">
    <text evidence="1">This protein is one of the early assembly proteins of the 50S ribosomal subunit, although it is not seen to bind rRNA by itself. It is important during the early stages of 50S assembly.</text>
</comment>
<comment type="subunit">
    <text evidence="1">Part of the 50S ribosomal subunit.</text>
</comment>
<comment type="similarity">
    <text evidence="1">Belongs to the universal ribosomal protein uL13 family.</text>
</comment>
<dbReference type="EMBL" id="CP000050">
    <property type="protein sequence ID" value="AAY47571.1"/>
    <property type="molecule type" value="Genomic_DNA"/>
</dbReference>
<dbReference type="RefSeq" id="WP_003483082.1">
    <property type="nucleotide sequence ID" value="NZ_CP155948.1"/>
</dbReference>
<dbReference type="SMR" id="Q4UZF2"/>
<dbReference type="GeneID" id="97508876"/>
<dbReference type="KEGG" id="xcb:XC_0490"/>
<dbReference type="HOGENOM" id="CLU_082184_2_2_6"/>
<dbReference type="Proteomes" id="UP000000420">
    <property type="component" value="Chromosome"/>
</dbReference>
<dbReference type="GO" id="GO:0022625">
    <property type="term" value="C:cytosolic large ribosomal subunit"/>
    <property type="evidence" value="ECO:0007669"/>
    <property type="project" value="TreeGrafter"/>
</dbReference>
<dbReference type="GO" id="GO:0003729">
    <property type="term" value="F:mRNA binding"/>
    <property type="evidence" value="ECO:0007669"/>
    <property type="project" value="TreeGrafter"/>
</dbReference>
<dbReference type="GO" id="GO:0003735">
    <property type="term" value="F:structural constituent of ribosome"/>
    <property type="evidence" value="ECO:0007669"/>
    <property type="project" value="InterPro"/>
</dbReference>
<dbReference type="GO" id="GO:0017148">
    <property type="term" value="P:negative regulation of translation"/>
    <property type="evidence" value="ECO:0007669"/>
    <property type="project" value="TreeGrafter"/>
</dbReference>
<dbReference type="GO" id="GO:0006412">
    <property type="term" value="P:translation"/>
    <property type="evidence" value="ECO:0007669"/>
    <property type="project" value="UniProtKB-UniRule"/>
</dbReference>
<dbReference type="CDD" id="cd00392">
    <property type="entry name" value="Ribosomal_L13"/>
    <property type="match status" value="1"/>
</dbReference>
<dbReference type="FunFam" id="3.90.1180.10:FF:000001">
    <property type="entry name" value="50S ribosomal protein L13"/>
    <property type="match status" value="1"/>
</dbReference>
<dbReference type="Gene3D" id="3.90.1180.10">
    <property type="entry name" value="Ribosomal protein L13"/>
    <property type="match status" value="1"/>
</dbReference>
<dbReference type="HAMAP" id="MF_01366">
    <property type="entry name" value="Ribosomal_uL13"/>
    <property type="match status" value="1"/>
</dbReference>
<dbReference type="InterPro" id="IPR005822">
    <property type="entry name" value="Ribosomal_uL13"/>
</dbReference>
<dbReference type="InterPro" id="IPR005823">
    <property type="entry name" value="Ribosomal_uL13_bac-type"/>
</dbReference>
<dbReference type="InterPro" id="IPR023563">
    <property type="entry name" value="Ribosomal_uL13_CS"/>
</dbReference>
<dbReference type="InterPro" id="IPR036899">
    <property type="entry name" value="Ribosomal_uL13_sf"/>
</dbReference>
<dbReference type="NCBIfam" id="TIGR01066">
    <property type="entry name" value="rplM_bact"/>
    <property type="match status" value="1"/>
</dbReference>
<dbReference type="PANTHER" id="PTHR11545:SF2">
    <property type="entry name" value="LARGE RIBOSOMAL SUBUNIT PROTEIN UL13M"/>
    <property type="match status" value="1"/>
</dbReference>
<dbReference type="PANTHER" id="PTHR11545">
    <property type="entry name" value="RIBOSOMAL PROTEIN L13"/>
    <property type="match status" value="1"/>
</dbReference>
<dbReference type="Pfam" id="PF00572">
    <property type="entry name" value="Ribosomal_L13"/>
    <property type="match status" value="1"/>
</dbReference>
<dbReference type="PIRSF" id="PIRSF002181">
    <property type="entry name" value="Ribosomal_L13"/>
    <property type="match status" value="1"/>
</dbReference>
<dbReference type="SUPFAM" id="SSF52161">
    <property type="entry name" value="Ribosomal protein L13"/>
    <property type="match status" value="1"/>
</dbReference>
<dbReference type="PROSITE" id="PS00783">
    <property type="entry name" value="RIBOSOMAL_L13"/>
    <property type="match status" value="1"/>
</dbReference>
<sequence>MTTFTAKSETVQRDWYLVDAAGKTLGRLSTELARRLRGKHKPVYTPHVDTGDYLVVINAEKIVVTGNKLKDKKYHRFTGYIGNLKTESLEQALQRHPERVIEIAVKGMLPKGPLGRTMYRKLKVYSGAEHPHAAQQPQVLDI</sequence>
<reference key="1">
    <citation type="journal article" date="2005" name="Genome Res.">
        <title>Comparative and functional genomic analyses of the pathogenicity of phytopathogen Xanthomonas campestris pv. campestris.</title>
        <authorList>
            <person name="Qian W."/>
            <person name="Jia Y."/>
            <person name="Ren S.-X."/>
            <person name="He Y.-Q."/>
            <person name="Feng J.-X."/>
            <person name="Lu L.-F."/>
            <person name="Sun Q."/>
            <person name="Ying G."/>
            <person name="Tang D.-J."/>
            <person name="Tang H."/>
            <person name="Wu W."/>
            <person name="Hao P."/>
            <person name="Wang L."/>
            <person name="Jiang B.-L."/>
            <person name="Zeng S."/>
            <person name="Gu W.-Y."/>
            <person name="Lu G."/>
            <person name="Rong L."/>
            <person name="Tian Y."/>
            <person name="Yao Z."/>
            <person name="Fu G."/>
            <person name="Chen B."/>
            <person name="Fang R."/>
            <person name="Qiang B."/>
            <person name="Chen Z."/>
            <person name="Zhao G.-P."/>
            <person name="Tang J.-L."/>
            <person name="He C."/>
        </authorList>
    </citation>
    <scope>NUCLEOTIDE SEQUENCE [LARGE SCALE GENOMIC DNA]</scope>
    <source>
        <strain>8004</strain>
    </source>
</reference>
<gene>
    <name evidence="1" type="primary">rplM</name>
    <name type="ordered locus">XC_0490</name>
</gene>
<protein>
    <recommendedName>
        <fullName evidence="1">Large ribosomal subunit protein uL13</fullName>
    </recommendedName>
    <alternativeName>
        <fullName evidence="2">50S ribosomal protein L13</fullName>
    </alternativeName>
</protein>
<accession>Q4UZF2</accession>
<proteinExistence type="inferred from homology"/>
<keyword id="KW-0687">Ribonucleoprotein</keyword>
<keyword id="KW-0689">Ribosomal protein</keyword>